<comment type="function">
    <text evidence="1">Part of the phosphoribosylformylglycinamidine synthase complex involved in the purines biosynthetic pathway. Catalyzes the ATP-dependent conversion of formylglycinamide ribonucleotide (FGAR) and glutamine to yield formylglycinamidine ribonucleotide (FGAM) and glutamate. The FGAM synthase complex is composed of three subunits. PurQ produces an ammonia molecule by converting glutamine to glutamate. PurL transfers the ammonia molecule to FGAR to form FGAM in an ATP-dependent manner. PurS interacts with PurQ and PurL and is thought to assist in the transfer of the ammonia molecule from PurQ to PurL.</text>
</comment>
<comment type="catalytic activity">
    <reaction evidence="1">
        <text>N(2)-formyl-N(1)-(5-phospho-beta-D-ribosyl)glycinamide + L-glutamine + ATP + H2O = 2-formamido-N(1)-(5-O-phospho-beta-D-ribosyl)acetamidine + L-glutamate + ADP + phosphate + H(+)</text>
        <dbReference type="Rhea" id="RHEA:17129"/>
        <dbReference type="ChEBI" id="CHEBI:15377"/>
        <dbReference type="ChEBI" id="CHEBI:15378"/>
        <dbReference type="ChEBI" id="CHEBI:29985"/>
        <dbReference type="ChEBI" id="CHEBI:30616"/>
        <dbReference type="ChEBI" id="CHEBI:43474"/>
        <dbReference type="ChEBI" id="CHEBI:58359"/>
        <dbReference type="ChEBI" id="CHEBI:147286"/>
        <dbReference type="ChEBI" id="CHEBI:147287"/>
        <dbReference type="ChEBI" id="CHEBI:456216"/>
        <dbReference type="EC" id="6.3.5.3"/>
    </reaction>
</comment>
<comment type="catalytic activity">
    <reaction evidence="1">
        <text>L-glutamine + H2O = L-glutamate + NH4(+)</text>
        <dbReference type="Rhea" id="RHEA:15889"/>
        <dbReference type="ChEBI" id="CHEBI:15377"/>
        <dbReference type="ChEBI" id="CHEBI:28938"/>
        <dbReference type="ChEBI" id="CHEBI:29985"/>
        <dbReference type="ChEBI" id="CHEBI:58359"/>
        <dbReference type="EC" id="3.5.1.2"/>
    </reaction>
</comment>
<comment type="pathway">
    <text evidence="1">Purine metabolism; IMP biosynthesis via de novo pathway; 5-amino-1-(5-phospho-D-ribosyl)imidazole from N(2)-formyl-N(1)-(5-phospho-D-ribosyl)glycinamide: step 1/2.</text>
</comment>
<comment type="subunit">
    <text evidence="1">Part of the FGAM synthase complex composed of 1 PurL, 1 PurQ and 2 PurS subunits.</text>
</comment>
<comment type="subcellular location">
    <subcellularLocation>
        <location evidence="1">Cytoplasm</location>
    </subcellularLocation>
</comment>
<gene>
    <name evidence="1" type="primary">purQ</name>
    <name type="ordered locus">jk0354</name>
</gene>
<accession>Q4JXF1</accession>
<sequence length="223" mass="23727">MTSRIGVITFPGTLDDVDAVRAVRLAGAEPVELWHADEDLKNVDAVVVPGGFSYGDYLRAGAIAAIAPAMKSVVAAAERGTPVLGICNGFQILQEAGLLPGALTRNEGLHFVCRDIYLDVENTSTAWTNQFAEGTKILVPSKHGEGRFQASEETLERLEGEGRVVFRYVENHNGSRNSIAGVCSENGRVVGLMPHPEHAVETLTGPSLDGLGLFQSVLSTLVS</sequence>
<dbReference type="EC" id="6.3.5.3" evidence="1"/>
<dbReference type="EC" id="3.5.1.2" evidence="1"/>
<dbReference type="EMBL" id="CR931997">
    <property type="protein sequence ID" value="CAI36506.1"/>
    <property type="molecule type" value="Genomic_DNA"/>
</dbReference>
<dbReference type="RefSeq" id="WP_011273065.1">
    <property type="nucleotide sequence ID" value="NC_007164.1"/>
</dbReference>
<dbReference type="SMR" id="Q4JXF1"/>
<dbReference type="STRING" id="306537.jk0354"/>
<dbReference type="KEGG" id="cjk:jk0354"/>
<dbReference type="PATRIC" id="fig|306537.10.peg.365"/>
<dbReference type="eggNOG" id="COG0047">
    <property type="taxonomic scope" value="Bacteria"/>
</dbReference>
<dbReference type="HOGENOM" id="CLU_001031_3_1_11"/>
<dbReference type="OrthoDB" id="9804441at2"/>
<dbReference type="UniPathway" id="UPA00074">
    <property type="reaction ID" value="UER00128"/>
</dbReference>
<dbReference type="Proteomes" id="UP000000545">
    <property type="component" value="Chromosome"/>
</dbReference>
<dbReference type="GO" id="GO:0005737">
    <property type="term" value="C:cytoplasm"/>
    <property type="evidence" value="ECO:0007669"/>
    <property type="project" value="UniProtKB-SubCell"/>
</dbReference>
<dbReference type="GO" id="GO:0005524">
    <property type="term" value="F:ATP binding"/>
    <property type="evidence" value="ECO:0007669"/>
    <property type="project" value="UniProtKB-KW"/>
</dbReference>
<dbReference type="GO" id="GO:0004359">
    <property type="term" value="F:glutaminase activity"/>
    <property type="evidence" value="ECO:0007669"/>
    <property type="project" value="UniProtKB-EC"/>
</dbReference>
<dbReference type="GO" id="GO:0004642">
    <property type="term" value="F:phosphoribosylformylglycinamidine synthase activity"/>
    <property type="evidence" value="ECO:0007669"/>
    <property type="project" value="UniProtKB-UniRule"/>
</dbReference>
<dbReference type="GO" id="GO:0006189">
    <property type="term" value="P:'de novo' IMP biosynthetic process"/>
    <property type="evidence" value="ECO:0007669"/>
    <property type="project" value="UniProtKB-UniRule"/>
</dbReference>
<dbReference type="CDD" id="cd01740">
    <property type="entry name" value="GATase1_FGAR_AT"/>
    <property type="match status" value="1"/>
</dbReference>
<dbReference type="FunFam" id="3.40.50.880:FF:000019">
    <property type="entry name" value="Phosphoribosylformylglycinamidine synthase subunit PurQ"/>
    <property type="match status" value="1"/>
</dbReference>
<dbReference type="Gene3D" id="3.40.50.880">
    <property type="match status" value="1"/>
</dbReference>
<dbReference type="HAMAP" id="MF_00421">
    <property type="entry name" value="PurQ"/>
    <property type="match status" value="1"/>
</dbReference>
<dbReference type="InterPro" id="IPR029062">
    <property type="entry name" value="Class_I_gatase-like"/>
</dbReference>
<dbReference type="InterPro" id="IPR010075">
    <property type="entry name" value="PRibForGlyAmidine_synth_PurQ"/>
</dbReference>
<dbReference type="NCBIfam" id="TIGR01737">
    <property type="entry name" value="FGAM_synth_I"/>
    <property type="match status" value="1"/>
</dbReference>
<dbReference type="NCBIfam" id="NF002957">
    <property type="entry name" value="PRK03619.1"/>
    <property type="match status" value="1"/>
</dbReference>
<dbReference type="PANTHER" id="PTHR47552">
    <property type="entry name" value="PHOSPHORIBOSYLFORMYLGLYCINAMIDINE SYNTHASE SUBUNIT PURQ"/>
    <property type="match status" value="1"/>
</dbReference>
<dbReference type="PANTHER" id="PTHR47552:SF1">
    <property type="entry name" value="PHOSPHORIBOSYLFORMYLGLYCINAMIDINE SYNTHASE SUBUNIT PURQ"/>
    <property type="match status" value="1"/>
</dbReference>
<dbReference type="Pfam" id="PF13507">
    <property type="entry name" value="GATase_5"/>
    <property type="match status" value="1"/>
</dbReference>
<dbReference type="PIRSF" id="PIRSF001586">
    <property type="entry name" value="FGAM_synth_I"/>
    <property type="match status" value="1"/>
</dbReference>
<dbReference type="SMART" id="SM01211">
    <property type="entry name" value="GATase_5"/>
    <property type="match status" value="1"/>
</dbReference>
<dbReference type="SUPFAM" id="SSF52317">
    <property type="entry name" value="Class I glutamine amidotransferase-like"/>
    <property type="match status" value="1"/>
</dbReference>
<dbReference type="PROSITE" id="PS51273">
    <property type="entry name" value="GATASE_TYPE_1"/>
    <property type="match status" value="1"/>
</dbReference>
<name>PURQ_CORJK</name>
<reference key="1">
    <citation type="journal article" date="2005" name="J. Bacteriol.">
        <title>Complete genome sequence and analysis of the multiresistant nosocomial pathogen Corynebacterium jeikeium K411, a lipid-requiring bacterium of the human skin flora.</title>
        <authorList>
            <person name="Tauch A."/>
            <person name="Kaiser O."/>
            <person name="Hain T."/>
            <person name="Goesmann A."/>
            <person name="Weisshaar B."/>
            <person name="Albersmeier A."/>
            <person name="Bekel T."/>
            <person name="Bischoff N."/>
            <person name="Brune I."/>
            <person name="Chakraborty T."/>
            <person name="Kalinowski J."/>
            <person name="Meyer F."/>
            <person name="Rupp O."/>
            <person name="Schneiker S."/>
            <person name="Viehoever P."/>
            <person name="Puehler A."/>
        </authorList>
    </citation>
    <scope>NUCLEOTIDE SEQUENCE [LARGE SCALE GENOMIC DNA]</scope>
    <source>
        <strain>K411</strain>
    </source>
</reference>
<protein>
    <recommendedName>
        <fullName evidence="1">Phosphoribosylformylglycinamidine synthase subunit PurQ</fullName>
        <shortName evidence="1">FGAM synthase</shortName>
        <ecNumber evidence="1">6.3.5.3</ecNumber>
    </recommendedName>
    <alternativeName>
        <fullName evidence="1">Formylglycinamide ribonucleotide amidotransferase subunit I</fullName>
        <shortName evidence="1">FGAR amidotransferase I</shortName>
        <shortName evidence="1">FGAR-AT I</shortName>
    </alternativeName>
    <alternativeName>
        <fullName evidence="1">Glutaminase PurQ</fullName>
        <ecNumber evidence="1">3.5.1.2</ecNumber>
    </alternativeName>
    <alternativeName>
        <fullName evidence="1">Phosphoribosylformylglycinamidine synthase subunit I</fullName>
    </alternativeName>
</protein>
<feature type="chain" id="PRO_0000252703" description="Phosphoribosylformylglycinamidine synthase subunit PurQ">
    <location>
        <begin position="1"/>
        <end position="223"/>
    </location>
</feature>
<feature type="domain" description="Glutamine amidotransferase type-1" evidence="1">
    <location>
        <begin position="4"/>
        <end position="223"/>
    </location>
</feature>
<feature type="active site" description="Nucleophile" evidence="1">
    <location>
        <position position="87"/>
    </location>
</feature>
<feature type="active site" evidence="1">
    <location>
        <position position="195"/>
    </location>
</feature>
<feature type="active site" evidence="1">
    <location>
        <position position="197"/>
    </location>
</feature>
<keyword id="KW-0067">ATP-binding</keyword>
<keyword id="KW-0963">Cytoplasm</keyword>
<keyword id="KW-0315">Glutamine amidotransferase</keyword>
<keyword id="KW-0378">Hydrolase</keyword>
<keyword id="KW-0436">Ligase</keyword>
<keyword id="KW-0547">Nucleotide-binding</keyword>
<keyword id="KW-0658">Purine biosynthesis</keyword>
<keyword id="KW-1185">Reference proteome</keyword>
<evidence type="ECO:0000255" key="1">
    <source>
        <dbReference type="HAMAP-Rule" id="MF_00421"/>
    </source>
</evidence>
<proteinExistence type="inferred from homology"/>
<organism>
    <name type="scientific">Corynebacterium jeikeium (strain K411)</name>
    <dbReference type="NCBI Taxonomy" id="306537"/>
    <lineage>
        <taxon>Bacteria</taxon>
        <taxon>Bacillati</taxon>
        <taxon>Actinomycetota</taxon>
        <taxon>Actinomycetes</taxon>
        <taxon>Mycobacteriales</taxon>
        <taxon>Corynebacteriaceae</taxon>
        <taxon>Corynebacterium</taxon>
    </lineage>
</organism>